<proteinExistence type="inferred from homology"/>
<sequence length="309" mass="35000">LWNYILKSITRIMDYIIYRFLLIVVILATIINAQNYGVNLPITGSMDTAYANSTQSEPFLTSTLCLYYPVEASNEIADTEWKDTLSQLFLTKGWPTGSVYLKEYADIAAFSVEPQLYCDYNLVLMKYDSTQELDMSELADLILNEWLCNPMDITLYYYQQTDEANKWISMGSSCTVKVCPLNTQTLGIGCLITNPDTFETVATTEKLVITDVVDGVSHKLNVTTATCTIRNCKKLGPKENVAVIQVGGANILDITADPTTTPQTERMMAIIWKKWWQVVYPVVDYVNQIIQTMSKRSRSLNSSAFYYRV</sequence>
<evidence type="ECO:0000250" key="1"/>
<evidence type="ECO:0000255" key="2"/>
<evidence type="ECO:0000255" key="3">
    <source>
        <dbReference type="HAMAP-Rule" id="MF_04131"/>
    </source>
</evidence>
<evidence type="ECO:0000303" key="4">
    <source>
    </source>
</evidence>
<evidence type="ECO:0000305" key="5"/>
<comment type="function">
    <text evidence="3">Calcium-binding protein that interacts with rotavirus cell receptors once the initial attachment by VP4 has been achieved. Rotavirus attachment and entry into the host cell probably involves multiple sequential contacts between the outer capsid proteins VP4 and VP7, and the cell receptors. Following entry into the host cell, low intracellular or intravesicular Ca(2+) concentration probably causes the calcium-stabilized VP7 trimers to dissociate from the virion. This step is probably necessary for the membrane-disrupting entry step and the release of VP4, which is locked onto the virion by VP7.</text>
</comment>
<comment type="subunit">
    <text evidence="3">Homotrimer; disulfide-linked. 2 Ca(2+) ions bound at each subunit interface in the trimer hold the trimer together. Interacts with the intermediate capsid protein VP6. Interacts with the outer capsid protein VP5*.</text>
</comment>
<comment type="subcellular location">
    <subcellularLocation>
        <location evidence="3">Virion</location>
    </subcellularLocation>
    <subcellularLocation>
        <location evidence="3">Host endoplasmic reticulum lumen</location>
    </subcellularLocation>
    <text evidence="3">The outer layer contains 780 copies of VP7, grouped as 260 trimers. Immature double-layered particles assembled in the cytoplasm bud across the membrane of the endoplasmic reticulum, acquiring during this process a transient lipid membrane that is modified with the ER resident viral glycoproteins NSP4 and VP7; these enveloped particles also contain VP4. As the particles move towards the interior of the ER. cisternae, the transient lipid membrane and the non-structural protein NSP4 are lost, while the virus surface proteins VP4 and VP7 rearrange to form the outermost virus protein layer, yielding mature infectious triple-layered particles.</text>
</comment>
<comment type="alternative products">
    <event type="alternative initiation"/>
    <isoform>
        <id>A8D8S8-1</id>
        <name>1</name>
        <sequence type="displayed"/>
    </isoform>
    <isoform>
        <id>A8D8S8-2</id>
        <name>2</name>
        <sequence type="described" ref="VSP_038610"/>
    </isoform>
</comment>
<comment type="PTM">
    <text evidence="1">Intramolecular disulfide bonds.</text>
</comment>
<comment type="PTM">
    <text evidence="3">N-glycosylated.</text>
</comment>
<comment type="PTM">
    <text evidence="3">The N-terminus is blocked possibly by pyroglutamic acid.</text>
</comment>
<comment type="miscellaneous">
    <text evidence="3 4">Some rotavirus strains are neuraminidase-sensitive and require sialic acid to attach to the cell surface. Some rotavirus strains are integrin-dependent. Some rotavirus strains depend on ganglioside for their entry into the host cell. Hsp70 also seems to be involved in the entry of some strains.</text>
</comment>
<comment type="miscellaneous">
    <text evidence="3">In group A rotaviruses, VP7 defines the G serotype.</text>
</comment>
<comment type="similarity">
    <text evidence="3">Belongs to the rotavirus VP7 family.</text>
</comment>
<organismHost>
    <name type="scientific">Bos taurus</name>
    <name type="common">Bovine</name>
    <dbReference type="NCBI Taxonomy" id="9913"/>
</organismHost>
<protein>
    <recommendedName>
        <fullName evidence="3">Outer capsid glycoprotein VP7</fullName>
    </recommendedName>
</protein>
<feature type="signal peptide" evidence="3">
    <location>
        <begin position="1" status="less than"/>
        <end position="33"/>
    </location>
</feature>
<feature type="chain" id="PRO_0000369107" description="Outer capsid glycoprotein VP7" evidence="3">
    <location>
        <begin position="34"/>
        <end position="309"/>
    </location>
</feature>
<feature type="region of interest" description="CNP motif; interaction with ITGAV/ITGB3" evidence="3">
    <location>
        <begin position="148"/>
        <end position="150"/>
    </location>
</feature>
<feature type="binding site" evidence="3">
    <location>
        <position position="78"/>
    </location>
    <ligand>
        <name>Ca(2+)</name>
        <dbReference type="ChEBI" id="CHEBI:29108"/>
        <label>1</label>
    </ligand>
</feature>
<feature type="binding site" evidence="3">
    <location>
        <position position="160"/>
    </location>
    <ligand>
        <name>Ca(2+)</name>
        <dbReference type="ChEBI" id="CHEBI:29108"/>
        <label>2</label>
    </ligand>
</feature>
<feature type="binding site" evidence="3">
    <location>
        <position position="189"/>
    </location>
    <ligand>
        <name>Ca(2+)</name>
        <dbReference type="ChEBI" id="CHEBI:29108"/>
        <label>1</label>
    </ligand>
</feature>
<feature type="binding site" evidence="3">
    <location>
        <position position="197"/>
    </location>
    <ligand>
        <name>Ca(2+)</name>
        <dbReference type="ChEBI" id="CHEBI:29108"/>
        <label>1</label>
    </ligand>
</feature>
<feature type="binding site" evidence="3">
    <location>
        <position position="199"/>
    </location>
    <ligand>
        <name>Ca(2+)</name>
        <dbReference type="ChEBI" id="CHEBI:29108"/>
        <label>1</label>
    </ligand>
</feature>
<feature type="binding site" evidence="3">
    <location>
        <position position="211"/>
    </location>
    <ligand>
        <name>Ca(2+)</name>
        <dbReference type="ChEBI" id="CHEBI:29108"/>
        <label>2</label>
    </ligand>
</feature>
<feature type="binding site" evidence="3">
    <location>
        <position position="212"/>
    </location>
    <ligand>
        <name>Ca(2+)</name>
        <dbReference type="ChEBI" id="CHEBI:29108"/>
        <label>2</label>
    </ligand>
</feature>
<feature type="binding site" evidence="3">
    <location>
        <position position="214"/>
    </location>
    <ligand>
        <name>Ca(2+)</name>
        <dbReference type="ChEBI" id="CHEBI:29108"/>
        <label>2</label>
    </ligand>
</feature>
<feature type="binding site" evidence="3">
    <location>
        <position position="284"/>
    </location>
    <ligand>
        <name>Ca(2+)</name>
        <dbReference type="ChEBI" id="CHEBI:29108"/>
        <label>2</label>
    </ligand>
</feature>
<feature type="glycosylation site" description="N-linked (GlcNAc...) asparagine; by host" evidence="2">
    <location>
        <position position="52"/>
    </location>
</feature>
<feature type="glycosylation site" description="N-linked (GlcNAc...) asparagine; by host" evidence="2">
    <location>
        <position position="221"/>
    </location>
</feature>
<feature type="glycosylation site" description="N-linked (GlcNAc...) asparagine; by host" evidence="2">
    <location>
        <position position="301"/>
    </location>
</feature>
<feature type="disulfide bond" evidence="3">
    <location>
        <begin position="65"/>
        <end position="118"/>
    </location>
</feature>
<feature type="disulfide bond" evidence="3">
    <location>
        <begin position="148"/>
        <end position="232"/>
    </location>
</feature>
<feature type="disulfide bond" evidence="3">
    <location>
        <begin position="174"/>
        <end position="227"/>
    </location>
</feature>
<feature type="disulfide bond" evidence="3">
    <location>
        <begin position="179"/>
        <end position="190"/>
    </location>
</feature>
<feature type="splice variant" id="VSP_038610" description="In isoform 2." evidence="5">
    <location>
        <begin position="1"/>
        <end position="12"/>
    </location>
</feature>
<feature type="non-terminal residue">
    <location>
        <position position="1"/>
    </location>
</feature>
<dbReference type="EMBL" id="EU143710">
    <property type="protein sequence ID" value="ABV68899.1"/>
    <property type="molecule type" value="Genomic_RNA"/>
</dbReference>
<dbReference type="SMR" id="A8D8S8"/>
<dbReference type="GO" id="GO:0044166">
    <property type="term" value="C:host cell endoplasmic reticulum lumen"/>
    <property type="evidence" value="ECO:0007669"/>
    <property type="project" value="UniProtKB-SubCell"/>
</dbReference>
<dbReference type="GO" id="GO:0039621">
    <property type="term" value="C:T=13 icosahedral viral capsid"/>
    <property type="evidence" value="ECO:0007669"/>
    <property type="project" value="UniProtKB-KW"/>
</dbReference>
<dbReference type="GO" id="GO:0039624">
    <property type="term" value="C:viral outer capsid"/>
    <property type="evidence" value="ECO:0007669"/>
    <property type="project" value="UniProtKB-KW"/>
</dbReference>
<dbReference type="GO" id="GO:0046872">
    <property type="term" value="F:metal ion binding"/>
    <property type="evidence" value="ECO:0007669"/>
    <property type="project" value="UniProtKB-KW"/>
</dbReference>
<dbReference type="Gene3D" id="3.40.50.11130">
    <property type="entry name" value="Glycoprotein VP7, domain 1"/>
    <property type="match status" value="1"/>
</dbReference>
<dbReference type="Gene3D" id="2.60.120.800">
    <property type="entry name" value="Rotavirus outer-layer protein VP7, domain 2"/>
    <property type="match status" value="1"/>
</dbReference>
<dbReference type="HAMAP" id="MF_04130">
    <property type="entry name" value="Rota_VP7"/>
    <property type="match status" value="1"/>
</dbReference>
<dbReference type="HAMAP" id="MF_04131">
    <property type="entry name" value="Rota_VP7_A"/>
    <property type="match status" value="1"/>
</dbReference>
<dbReference type="InterPro" id="IPR001963">
    <property type="entry name" value="VP7"/>
</dbReference>
<dbReference type="InterPro" id="IPR042207">
    <property type="entry name" value="VP7_1"/>
</dbReference>
<dbReference type="InterPro" id="IPR042210">
    <property type="entry name" value="VP7_2"/>
</dbReference>
<dbReference type="Pfam" id="PF00434">
    <property type="entry name" value="VP7"/>
    <property type="match status" value="1"/>
</dbReference>
<accession>A8D8S8</accession>
<organism>
    <name type="scientific">Rotavirus A (strain RVA/Cow/Canada/C486/1977/G6P6[1])</name>
    <name type="common">RV-A</name>
    <dbReference type="NCBI Taxonomy" id="10931"/>
    <lineage>
        <taxon>Viruses</taxon>
        <taxon>Riboviria</taxon>
        <taxon>Orthornavirae</taxon>
        <taxon>Duplornaviricota</taxon>
        <taxon>Resentoviricetes</taxon>
        <taxon>Reovirales</taxon>
        <taxon>Sedoreoviridae</taxon>
        <taxon>Rotavirus</taxon>
        <taxon>Rotavirus A</taxon>
    </lineage>
</organism>
<reference key="1">
    <citation type="submission" date="2007-09" db="EMBL/GenBank/DDBJ databases">
        <title>Nucleotide sequence of the structural glycoprotein VP7 gene of C486 G6P[5] Bovine rotavirus.</title>
        <authorList>
            <person name="Gonzalez D.D."/>
            <person name="Mozgovoj M.V."/>
            <person name="Bellido D."/>
            <person name="Parreno V.G."/>
            <person name="Wigdorovitz A."/>
            <person name="Dus Santos M.J."/>
        </authorList>
    </citation>
    <scope>NUCLEOTIDE SEQUENCE [GENOMIC RNA]</scope>
</reference>
<reference key="2">
    <citation type="journal article" date="2004" name="Trends Microbiol.">
        <title>Multistep entry of rotavirus into cells: a Versaillesque dance.</title>
        <authorList>
            <person name="Lopez S."/>
            <person name="Arias C.F."/>
        </authorList>
    </citation>
    <scope>REVIEW</scope>
</reference>
<name>VP7_ROTBC</name>
<keyword id="KW-0024">Alternative initiation</keyword>
<keyword id="KW-0106">Calcium</keyword>
<keyword id="KW-0167">Capsid protein</keyword>
<keyword id="KW-1015">Disulfide bond</keyword>
<keyword id="KW-0325">Glycoprotein</keyword>
<keyword id="KW-1038">Host endoplasmic reticulum</keyword>
<keyword id="KW-0945">Host-virus interaction</keyword>
<keyword id="KW-0479">Metal-binding</keyword>
<keyword id="KW-1152">Outer capsid protein</keyword>
<keyword id="KW-0732">Signal</keyword>
<keyword id="KW-1146">T=13 icosahedral capsid protein</keyword>
<keyword id="KW-0946">Virion</keyword>